<accession>A7I2S8</accession>
<comment type="function">
    <text evidence="1">Catalyzes the decarboxylation of four acetate groups of uroporphyrinogen-III to yield coproporphyrinogen-III.</text>
</comment>
<comment type="catalytic activity">
    <reaction evidence="1">
        <text>uroporphyrinogen III + 4 H(+) = coproporphyrinogen III + 4 CO2</text>
        <dbReference type="Rhea" id="RHEA:19865"/>
        <dbReference type="ChEBI" id="CHEBI:15378"/>
        <dbReference type="ChEBI" id="CHEBI:16526"/>
        <dbReference type="ChEBI" id="CHEBI:57308"/>
        <dbReference type="ChEBI" id="CHEBI:57309"/>
        <dbReference type="EC" id="4.1.1.37"/>
    </reaction>
</comment>
<comment type="pathway">
    <text evidence="1">Porphyrin-containing compound metabolism; protoporphyrin-IX biosynthesis; coproporphyrinogen-III from 5-aminolevulinate: step 4/4.</text>
</comment>
<comment type="subunit">
    <text evidence="1">Homodimer.</text>
</comment>
<comment type="subcellular location">
    <subcellularLocation>
        <location evidence="1">Cytoplasm</location>
    </subcellularLocation>
</comment>
<comment type="similarity">
    <text evidence="1">Belongs to the uroporphyrinogen decarboxylase family.</text>
</comment>
<protein>
    <recommendedName>
        <fullName evidence="1">Uroporphyrinogen decarboxylase</fullName>
        <shortName evidence="1">UPD</shortName>
        <shortName evidence="1">URO-D</shortName>
        <ecNumber evidence="1">4.1.1.37</ecNumber>
    </recommendedName>
</protein>
<organism>
    <name type="scientific">Campylobacter hominis (strain ATCC BAA-381 / DSM 21671 / CCUG 45161 / LMG 19568 / NCTC 13146 / CH001A)</name>
    <dbReference type="NCBI Taxonomy" id="360107"/>
    <lineage>
        <taxon>Bacteria</taxon>
        <taxon>Pseudomonadati</taxon>
        <taxon>Campylobacterota</taxon>
        <taxon>Epsilonproteobacteria</taxon>
        <taxon>Campylobacterales</taxon>
        <taxon>Campylobacteraceae</taxon>
        <taxon>Campylobacter</taxon>
    </lineage>
</organism>
<evidence type="ECO:0000255" key="1">
    <source>
        <dbReference type="HAMAP-Rule" id="MF_00218"/>
    </source>
</evidence>
<reference key="1">
    <citation type="submission" date="2007-07" db="EMBL/GenBank/DDBJ databases">
        <title>Complete genome sequence of Campylobacter hominis ATCC BAA-381, a commensal isolated from the human gastrointestinal tract.</title>
        <authorList>
            <person name="Fouts D.E."/>
            <person name="Mongodin E.F."/>
            <person name="Puiu D."/>
            <person name="Sebastian Y."/>
            <person name="Miller W.G."/>
            <person name="Mandrell R.E."/>
            <person name="Nelson K.E."/>
        </authorList>
    </citation>
    <scope>NUCLEOTIDE SEQUENCE [LARGE SCALE GENOMIC DNA]</scope>
    <source>
        <strain>ATCC BAA-381 / DSM 21671 / CCUG 45161 / LMG 19568 / NCTC 13146 / CH001A</strain>
    </source>
</reference>
<name>DCUP_CAMHC</name>
<gene>
    <name evidence="1" type="primary">hemE</name>
    <name type="ordered locus">CHAB381_1268</name>
</gene>
<dbReference type="EC" id="4.1.1.37" evidence="1"/>
<dbReference type="EMBL" id="CP000776">
    <property type="protein sequence ID" value="ABS52200.1"/>
    <property type="molecule type" value="Genomic_DNA"/>
</dbReference>
<dbReference type="RefSeq" id="WP_012109120.1">
    <property type="nucleotide sequence ID" value="NC_009714.1"/>
</dbReference>
<dbReference type="SMR" id="A7I2S8"/>
<dbReference type="STRING" id="360107.CHAB381_1268"/>
<dbReference type="KEGG" id="cha:CHAB381_1268"/>
<dbReference type="eggNOG" id="COG0407">
    <property type="taxonomic scope" value="Bacteria"/>
</dbReference>
<dbReference type="HOGENOM" id="CLU_040933_0_0_7"/>
<dbReference type="OrthoDB" id="9806656at2"/>
<dbReference type="UniPathway" id="UPA00251">
    <property type="reaction ID" value="UER00321"/>
</dbReference>
<dbReference type="Proteomes" id="UP000002407">
    <property type="component" value="Chromosome"/>
</dbReference>
<dbReference type="GO" id="GO:0005829">
    <property type="term" value="C:cytosol"/>
    <property type="evidence" value="ECO:0007669"/>
    <property type="project" value="TreeGrafter"/>
</dbReference>
<dbReference type="GO" id="GO:0004853">
    <property type="term" value="F:uroporphyrinogen decarboxylase activity"/>
    <property type="evidence" value="ECO:0007669"/>
    <property type="project" value="UniProtKB-UniRule"/>
</dbReference>
<dbReference type="GO" id="GO:0019353">
    <property type="term" value="P:protoporphyrinogen IX biosynthetic process from glutamate"/>
    <property type="evidence" value="ECO:0007669"/>
    <property type="project" value="TreeGrafter"/>
</dbReference>
<dbReference type="CDD" id="cd00717">
    <property type="entry name" value="URO-D"/>
    <property type="match status" value="1"/>
</dbReference>
<dbReference type="FunFam" id="3.20.20.210:FF:000007">
    <property type="entry name" value="Uroporphyrinogen decarboxylase"/>
    <property type="match status" value="1"/>
</dbReference>
<dbReference type="Gene3D" id="3.20.20.210">
    <property type="match status" value="1"/>
</dbReference>
<dbReference type="HAMAP" id="MF_00218">
    <property type="entry name" value="URO_D"/>
    <property type="match status" value="1"/>
</dbReference>
<dbReference type="InterPro" id="IPR038071">
    <property type="entry name" value="UROD/MetE-like_sf"/>
</dbReference>
<dbReference type="InterPro" id="IPR006361">
    <property type="entry name" value="Uroporphyrinogen_deCO2ase_HemE"/>
</dbReference>
<dbReference type="InterPro" id="IPR000257">
    <property type="entry name" value="Uroporphyrinogen_deCOase"/>
</dbReference>
<dbReference type="NCBIfam" id="TIGR01464">
    <property type="entry name" value="hemE"/>
    <property type="match status" value="1"/>
</dbReference>
<dbReference type="PANTHER" id="PTHR21091">
    <property type="entry name" value="METHYLTETRAHYDROFOLATE:HOMOCYSTEINE METHYLTRANSFERASE RELATED"/>
    <property type="match status" value="1"/>
</dbReference>
<dbReference type="PANTHER" id="PTHR21091:SF169">
    <property type="entry name" value="UROPORPHYRINOGEN DECARBOXYLASE"/>
    <property type="match status" value="1"/>
</dbReference>
<dbReference type="Pfam" id="PF01208">
    <property type="entry name" value="URO-D"/>
    <property type="match status" value="1"/>
</dbReference>
<dbReference type="SUPFAM" id="SSF51726">
    <property type="entry name" value="UROD/MetE-like"/>
    <property type="match status" value="1"/>
</dbReference>
<dbReference type="PROSITE" id="PS00906">
    <property type="entry name" value="UROD_1"/>
    <property type="match status" value="1"/>
</dbReference>
<dbReference type="PROSITE" id="PS00907">
    <property type="entry name" value="UROD_2"/>
    <property type="match status" value="1"/>
</dbReference>
<sequence>MIFIDACLKKKTPYTPVWMMRQAGRYLPEYMKVRNEVGGFLELCKNYKKASEVTIQPVEILGVDAAILFSDILVIPLEMGMDLHFIKGEGPIFESPVKNENDLAKLSLQKAVKNLQYVYDTISLTREKLPKDKALIGFCGAPWTIATYMIEGKGSKTYSVCKKLLYTNPEFLHKILTLITETLKLYLENQIKSGVNTVQIFDSWASALECEAFFEFSWKYIIEICDFIKAKYPQIPIIVFPKGISGYLDKIYGNFDVFGVDWSTPLESASKILSAKYTLQGNMEPCRLYNKNAIKESVEQILNTMKGKPHIFNLGHGILPDIPVENAKYFIRLVQERSSL</sequence>
<feature type="chain" id="PRO_1000023890" description="Uroporphyrinogen decarboxylase">
    <location>
        <begin position="1"/>
        <end position="340"/>
    </location>
</feature>
<feature type="binding site" evidence="1">
    <location>
        <begin position="21"/>
        <end position="25"/>
    </location>
    <ligand>
        <name>substrate</name>
    </ligand>
</feature>
<feature type="binding site" evidence="1">
    <location>
        <position position="71"/>
    </location>
    <ligand>
        <name>substrate</name>
    </ligand>
</feature>
<feature type="binding site" evidence="1">
    <location>
        <position position="148"/>
    </location>
    <ligand>
        <name>substrate</name>
    </ligand>
</feature>
<feature type="binding site" evidence="1">
    <location>
        <position position="203"/>
    </location>
    <ligand>
        <name>substrate</name>
    </ligand>
</feature>
<feature type="binding site" evidence="1">
    <location>
        <position position="316"/>
    </location>
    <ligand>
        <name>substrate</name>
    </ligand>
</feature>
<feature type="site" description="Transition state stabilizer" evidence="1">
    <location>
        <position position="71"/>
    </location>
</feature>
<proteinExistence type="inferred from homology"/>
<keyword id="KW-0963">Cytoplasm</keyword>
<keyword id="KW-0210">Decarboxylase</keyword>
<keyword id="KW-0456">Lyase</keyword>
<keyword id="KW-0627">Porphyrin biosynthesis</keyword>
<keyword id="KW-1185">Reference proteome</keyword>